<accession>Q9ZZX8</accession>
<geneLocation type="mitochondrion"/>
<protein>
    <recommendedName>
        <fullName>Putative uncharacterized protein Q0017, mitochondrial</fullName>
    </recommendedName>
</protein>
<feature type="chain" id="PRO_0000299679" description="Putative uncharacterized protein Q0017, mitochondrial">
    <location>
        <begin position="1"/>
        <end position="53"/>
    </location>
</feature>
<gene>
    <name type="ordered locus">Q0017</name>
    <name type="ORF">ORF7</name>
</gene>
<proteinExistence type="uncertain"/>
<dbReference type="EMBL" id="KP263414">
    <property type="status" value="NOT_ANNOTATED_CDS"/>
    <property type="molecule type" value="Genomic_DNA"/>
</dbReference>
<dbReference type="PIR" id="S78636">
    <property type="entry name" value="S78636"/>
</dbReference>
<dbReference type="STRING" id="4932.Q0017"/>
<dbReference type="PaxDb" id="4932-Q0017"/>
<dbReference type="EnsemblFungi" id="Q0017_mRNA">
    <property type="protein sequence ID" value="Q0017"/>
    <property type="gene ID" value="Q0017"/>
</dbReference>
<dbReference type="AGR" id="SGD:S000007258"/>
<dbReference type="SGD" id="S000007258">
    <property type="gene designation" value="Q0017"/>
</dbReference>
<dbReference type="HOGENOM" id="CLU_3070472_0_0_1"/>
<dbReference type="InParanoid" id="Q9ZZX8"/>
<dbReference type="Proteomes" id="UP000002311">
    <property type="component" value="Mitochondrion"/>
</dbReference>
<dbReference type="RNAct" id="Q9ZZX8">
    <property type="molecule type" value="protein"/>
</dbReference>
<dbReference type="GO" id="GO:0005739">
    <property type="term" value="C:mitochondrion"/>
    <property type="evidence" value="ECO:0007669"/>
    <property type="project" value="UniProtKB-SubCell"/>
</dbReference>
<reference key="1">
    <citation type="journal article" date="1998" name="FEBS Lett.">
        <title>The complete sequence of the mitochondrial genome of Saccharomyces cerevisiae.</title>
        <authorList>
            <person name="Foury F."/>
            <person name="Roganti T."/>
            <person name="Lecrenier N."/>
            <person name="Purnelle B."/>
        </authorList>
    </citation>
    <scope>NUCLEOTIDE SEQUENCE [LARGE SCALE GENOMIC DNA]</scope>
    <source>
        <strain>ATCC 96604 / S288c / FY1679</strain>
    </source>
</reference>
<reference key="2">
    <citation type="journal article" date="2014" name="G3 (Bethesda)">
        <title>The reference genome sequence of Saccharomyces cerevisiae: Then and now.</title>
        <authorList>
            <person name="Engel S.R."/>
            <person name="Dietrich F.S."/>
            <person name="Fisk D.G."/>
            <person name="Binkley G."/>
            <person name="Balakrishnan R."/>
            <person name="Costanzo M.C."/>
            <person name="Dwight S.S."/>
            <person name="Hitz B.C."/>
            <person name="Karra K."/>
            <person name="Nash R.S."/>
            <person name="Weng S."/>
            <person name="Wong E.D."/>
            <person name="Lloyd P."/>
            <person name="Skrzypek M.S."/>
            <person name="Miyasato S.R."/>
            <person name="Simison M."/>
            <person name="Cherry J.M."/>
        </authorList>
    </citation>
    <scope>GENOME REANNOTATION</scope>
    <source>
        <strain>ATCC 96604 / S288c / FY1679</strain>
    </source>
</reference>
<comment type="subcellular location">
    <subcellularLocation>
        <location evidence="1">Mitochondrion</location>
    </subcellularLocation>
</comment>
<comment type="caution">
    <text evidence="1">Product of a dubious gene prediction. Partially overlaps Q0010.</text>
</comment>
<keyword id="KW-0496">Mitochondrion</keyword>
<keyword id="KW-1185">Reference proteome</keyword>
<organism>
    <name type="scientific">Saccharomyces cerevisiae (strain ATCC 204508 / S288c)</name>
    <name type="common">Baker's yeast</name>
    <dbReference type="NCBI Taxonomy" id="559292"/>
    <lineage>
        <taxon>Eukaryota</taxon>
        <taxon>Fungi</taxon>
        <taxon>Dikarya</taxon>
        <taxon>Ascomycota</taxon>
        <taxon>Saccharomycotina</taxon>
        <taxon>Saccharomycetes</taxon>
        <taxon>Saccharomycetales</taxon>
        <taxon>Saccharomycetaceae</taxon>
        <taxon>Saccharomyces</taxon>
    </lineage>
</organism>
<sequence length="53" mass="6271">MCATYMFNITVIITHPTPTLRTRGPGFVRNRDLYIYKYKSNLINNLNNMTYIL</sequence>
<name>Q0017_YEAST</name>
<evidence type="ECO:0000305" key="1"/>